<feature type="chain" id="PRO_1000051555" description="Glucose-1-phosphate adenylyltransferase">
    <location>
        <begin position="1"/>
        <end position="411"/>
    </location>
</feature>
<feature type="binding site" evidence="1">
    <location>
        <position position="161"/>
    </location>
    <ligand>
        <name>alpha-D-glucose 1-phosphate</name>
        <dbReference type="ChEBI" id="CHEBI:58601"/>
    </ligand>
</feature>
<feature type="binding site" evidence="1">
    <location>
        <begin position="176"/>
        <end position="177"/>
    </location>
    <ligand>
        <name>alpha-D-glucose 1-phosphate</name>
        <dbReference type="ChEBI" id="CHEBI:58601"/>
    </ligand>
</feature>
<feature type="binding site" evidence="1">
    <location>
        <position position="195"/>
    </location>
    <ligand>
        <name>alpha-D-glucose 1-phosphate</name>
        <dbReference type="ChEBI" id="CHEBI:58601"/>
    </ligand>
</feature>
<accession>A7H6H5</accession>
<comment type="function">
    <text evidence="1">Involved in the biosynthesis of ADP-glucose, a building block required for the elongation reactions to produce glycogen. Catalyzes the reaction between ATP and alpha-D-glucose 1-phosphate (G1P) to produce pyrophosphate and ADP-Glc.</text>
</comment>
<comment type="catalytic activity">
    <reaction evidence="1">
        <text>alpha-D-glucose 1-phosphate + ATP + H(+) = ADP-alpha-D-glucose + diphosphate</text>
        <dbReference type="Rhea" id="RHEA:12120"/>
        <dbReference type="ChEBI" id="CHEBI:15378"/>
        <dbReference type="ChEBI" id="CHEBI:30616"/>
        <dbReference type="ChEBI" id="CHEBI:33019"/>
        <dbReference type="ChEBI" id="CHEBI:57498"/>
        <dbReference type="ChEBI" id="CHEBI:58601"/>
        <dbReference type="EC" id="2.7.7.27"/>
    </reaction>
</comment>
<comment type="pathway">
    <text evidence="1">Glycan biosynthesis; glycogen biosynthesis.</text>
</comment>
<comment type="subunit">
    <text evidence="1">Homotetramer.</text>
</comment>
<comment type="similarity">
    <text evidence="1">Belongs to the bacterial/plant glucose-1-phosphate adenylyltransferase family.</text>
</comment>
<dbReference type="EC" id="2.7.7.27" evidence="1"/>
<dbReference type="EMBL" id="CP000769">
    <property type="protein sequence ID" value="ABS24321.1"/>
    <property type="molecule type" value="Genomic_DNA"/>
</dbReference>
<dbReference type="RefSeq" id="WP_011984427.1">
    <property type="nucleotide sequence ID" value="NC_009675.1"/>
</dbReference>
<dbReference type="SMR" id="A7H6H5"/>
<dbReference type="STRING" id="404589.Anae109_0101"/>
<dbReference type="KEGG" id="afw:Anae109_0101"/>
<dbReference type="eggNOG" id="COG0448">
    <property type="taxonomic scope" value="Bacteria"/>
</dbReference>
<dbReference type="HOGENOM" id="CLU_029499_14_1_7"/>
<dbReference type="OrthoDB" id="9801810at2"/>
<dbReference type="UniPathway" id="UPA00164"/>
<dbReference type="Proteomes" id="UP000006382">
    <property type="component" value="Chromosome"/>
</dbReference>
<dbReference type="GO" id="GO:0005524">
    <property type="term" value="F:ATP binding"/>
    <property type="evidence" value="ECO:0007669"/>
    <property type="project" value="UniProtKB-KW"/>
</dbReference>
<dbReference type="GO" id="GO:0008878">
    <property type="term" value="F:glucose-1-phosphate adenylyltransferase activity"/>
    <property type="evidence" value="ECO:0007669"/>
    <property type="project" value="UniProtKB-UniRule"/>
</dbReference>
<dbReference type="GO" id="GO:0005978">
    <property type="term" value="P:glycogen biosynthetic process"/>
    <property type="evidence" value="ECO:0007669"/>
    <property type="project" value="UniProtKB-UniRule"/>
</dbReference>
<dbReference type="CDD" id="cd02508">
    <property type="entry name" value="ADP_Glucose_PP"/>
    <property type="match status" value="1"/>
</dbReference>
<dbReference type="CDD" id="cd04651">
    <property type="entry name" value="LbH_G1P_AT_C"/>
    <property type="match status" value="1"/>
</dbReference>
<dbReference type="Gene3D" id="2.160.10.10">
    <property type="entry name" value="Hexapeptide repeat proteins"/>
    <property type="match status" value="1"/>
</dbReference>
<dbReference type="Gene3D" id="3.90.550.10">
    <property type="entry name" value="Spore Coat Polysaccharide Biosynthesis Protein SpsA, Chain A"/>
    <property type="match status" value="1"/>
</dbReference>
<dbReference type="HAMAP" id="MF_00624">
    <property type="entry name" value="GlgC"/>
    <property type="match status" value="1"/>
</dbReference>
<dbReference type="InterPro" id="IPR011831">
    <property type="entry name" value="ADP-Glc_PPase"/>
</dbReference>
<dbReference type="InterPro" id="IPR005836">
    <property type="entry name" value="ADP_Glu_pyroP_CS"/>
</dbReference>
<dbReference type="InterPro" id="IPR023049">
    <property type="entry name" value="GlgC_bac"/>
</dbReference>
<dbReference type="InterPro" id="IPR056818">
    <property type="entry name" value="GlmU/GlgC-like_hexapep"/>
</dbReference>
<dbReference type="InterPro" id="IPR005835">
    <property type="entry name" value="NTP_transferase_dom"/>
</dbReference>
<dbReference type="InterPro" id="IPR029044">
    <property type="entry name" value="Nucleotide-diphossugar_trans"/>
</dbReference>
<dbReference type="InterPro" id="IPR011004">
    <property type="entry name" value="Trimer_LpxA-like_sf"/>
</dbReference>
<dbReference type="NCBIfam" id="TIGR02091">
    <property type="entry name" value="glgC"/>
    <property type="match status" value="1"/>
</dbReference>
<dbReference type="NCBIfam" id="NF001947">
    <property type="entry name" value="PRK00725.1"/>
    <property type="match status" value="1"/>
</dbReference>
<dbReference type="NCBIfam" id="NF002023">
    <property type="entry name" value="PRK00844.1"/>
    <property type="match status" value="1"/>
</dbReference>
<dbReference type="PANTHER" id="PTHR43523:SF2">
    <property type="entry name" value="GLUCOSE-1-PHOSPHATE ADENYLYLTRANSFERASE"/>
    <property type="match status" value="1"/>
</dbReference>
<dbReference type="PANTHER" id="PTHR43523">
    <property type="entry name" value="GLUCOSE-1-PHOSPHATE ADENYLYLTRANSFERASE-RELATED"/>
    <property type="match status" value="1"/>
</dbReference>
<dbReference type="Pfam" id="PF24894">
    <property type="entry name" value="Hexapep_GlmU"/>
    <property type="match status" value="1"/>
</dbReference>
<dbReference type="Pfam" id="PF00483">
    <property type="entry name" value="NTP_transferase"/>
    <property type="match status" value="1"/>
</dbReference>
<dbReference type="SUPFAM" id="SSF53448">
    <property type="entry name" value="Nucleotide-diphospho-sugar transferases"/>
    <property type="match status" value="1"/>
</dbReference>
<dbReference type="SUPFAM" id="SSF51161">
    <property type="entry name" value="Trimeric LpxA-like enzymes"/>
    <property type="match status" value="1"/>
</dbReference>
<dbReference type="PROSITE" id="PS00809">
    <property type="entry name" value="ADP_GLC_PYROPHOSPH_2"/>
    <property type="match status" value="1"/>
</dbReference>
<protein>
    <recommendedName>
        <fullName evidence="1">Glucose-1-phosphate adenylyltransferase</fullName>
        <ecNumber evidence="1">2.7.7.27</ecNumber>
    </recommendedName>
    <alternativeName>
        <fullName evidence="1">ADP-glucose pyrophosphorylase</fullName>
        <shortName evidence="1">ADPGlc PPase</shortName>
    </alternativeName>
    <alternativeName>
        <fullName evidence="1">ADP-glucose synthase</fullName>
    </alternativeName>
</protein>
<proteinExistence type="inferred from homology"/>
<organism>
    <name type="scientific">Anaeromyxobacter sp. (strain Fw109-5)</name>
    <dbReference type="NCBI Taxonomy" id="404589"/>
    <lineage>
        <taxon>Bacteria</taxon>
        <taxon>Pseudomonadati</taxon>
        <taxon>Myxococcota</taxon>
        <taxon>Myxococcia</taxon>
        <taxon>Myxococcales</taxon>
        <taxon>Cystobacterineae</taxon>
        <taxon>Anaeromyxobacteraceae</taxon>
        <taxon>Anaeromyxobacter</taxon>
    </lineage>
</organism>
<evidence type="ECO:0000255" key="1">
    <source>
        <dbReference type="HAMAP-Rule" id="MF_00624"/>
    </source>
</evidence>
<sequence length="411" mass="46103">MAKLLAMILAGGEGRRLDPLTRERAKPAVPFGGRYRIVDFVLSNFANSGVLKMKVLVQYKSESLNAHIQRGWRLTALLDQYVEIVPAQMRVGPKWFEGSADAIYQNLNIITDEEPEFTFIFGADHVYRMDVRQMLQFHQDKGADLTVAAIPVPVEEASEFGIIEVDGDGRMIGFVEKPKAGVKTMPGDPTRALASMGNYLFTTDALVQEIVRDAGDTKSAHDFGKSIVAAMYERKRVFVYDFAKNVVPGQGDKERGYWRDVGSLDAYYQANMDLVDVDPSFSLYNDRWPIFTAQHNFPPVKFVFNNQTEGRVGYATDSLVSEGCIISGGHAHHCILSPKVRINSYSLVEDSILFENVNIGRHCKIRRAIVDKHVEIPANTTIGYDLEHDRKRFHVTESGIVVIPKAMRVEP</sequence>
<reference key="1">
    <citation type="journal article" date="2015" name="Genome Announc.">
        <title>Complete genome sequence of Anaeromyxobacter sp. Fw109-5, an anaerobic, metal-reducing bacterium isolated from a contaminated subsurface environment.</title>
        <authorList>
            <person name="Hwang C."/>
            <person name="Copeland A."/>
            <person name="Lucas S."/>
            <person name="Lapidus A."/>
            <person name="Barry K."/>
            <person name="Glavina Del Rio T."/>
            <person name="Dalin E."/>
            <person name="Tice H."/>
            <person name="Pitluck S."/>
            <person name="Sims D."/>
            <person name="Brettin T."/>
            <person name="Bruce D.C."/>
            <person name="Detter J.C."/>
            <person name="Han C.S."/>
            <person name="Schmutz J."/>
            <person name="Larimer F.W."/>
            <person name="Land M.L."/>
            <person name="Hauser L.J."/>
            <person name="Kyrpides N."/>
            <person name="Lykidis A."/>
            <person name="Richardson P."/>
            <person name="Belieav A."/>
            <person name="Sanford R.A."/>
            <person name="Loeffler F.E."/>
            <person name="Fields M.W."/>
        </authorList>
    </citation>
    <scope>NUCLEOTIDE SEQUENCE [LARGE SCALE GENOMIC DNA]</scope>
    <source>
        <strain>Fw109-5</strain>
    </source>
</reference>
<gene>
    <name evidence="1" type="primary">glgC</name>
    <name type="ordered locus">Anae109_0101</name>
</gene>
<keyword id="KW-0067">ATP-binding</keyword>
<keyword id="KW-0119">Carbohydrate metabolism</keyword>
<keyword id="KW-0320">Glycogen biosynthesis</keyword>
<keyword id="KW-0321">Glycogen metabolism</keyword>
<keyword id="KW-0547">Nucleotide-binding</keyword>
<keyword id="KW-0548">Nucleotidyltransferase</keyword>
<keyword id="KW-1185">Reference proteome</keyword>
<keyword id="KW-0808">Transferase</keyword>
<name>GLGC_ANADF</name>